<organism>
    <name type="scientific">Mus musculus</name>
    <name type="common">Mouse</name>
    <dbReference type="NCBI Taxonomy" id="10090"/>
    <lineage>
        <taxon>Eukaryota</taxon>
        <taxon>Metazoa</taxon>
        <taxon>Chordata</taxon>
        <taxon>Craniata</taxon>
        <taxon>Vertebrata</taxon>
        <taxon>Euteleostomi</taxon>
        <taxon>Mammalia</taxon>
        <taxon>Eutheria</taxon>
        <taxon>Euarchontoglires</taxon>
        <taxon>Glires</taxon>
        <taxon>Rodentia</taxon>
        <taxon>Myomorpha</taxon>
        <taxon>Muroidea</taxon>
        <taxon>Muridae</taxon>
        <taxon>Murinae</taxon>
        <taxon>Mus</taxon>
        <taxon>Mus</taxon>
    </lineage>
</organism>
<feature type="chain" id="PRO_0000206092" description="Proton-coupled zinc antiporter SLC30A1">
    <location>
        <begin position="1"/>
        <end position="503"/>
    </location>
</feature>
<feature type="topological domain" description="Cytoplasmic" evidence="3">
    <location>
        <begin position="1"/>
        <end position="10"/>
    </location>
</feature>
<feature type="transmembrane region" description="Helical" evidence="4">
    <location>
        <begin position="11"/>
        <end position="31"/>
    </location>
</feature>
<feature type="topological domain" description="Extracellular" evidence="3">
    <location>
        <begin position="32"/>
        <end position="35"/>
    </location>
</feature>
<feature type="transmembrane region" description="Helical" evidence="4">
    <location>
        <begin position="36"/>
        <end position="56"/>
    </location>
</feature>
<feature type="topological domain" description="Cytoplasmic" evidence="3">
    <location>
        <begin position="57"/>
        <end position="78"/>
    </location>
</feature>
<feature type="transmembrane region" description="Helical" evidence="4">
    <location>
        <begin position="79"/>
        <end position="99"/>
    </location>
</feature>
<feature type="topological domain" description="Extracellular" evidence="3">
    <location>
        <begin position="100"/>
        <end position="113"/>
    </location>
</feature>
<feature type="transmembrane region" description="Helical" evidence="4">
    <location>
        <begin position="114"/>
        <end position="134"/>
    </location>
</feature>
<feature type="topological domain" description="Cytoplasmic" evidence="3">
    <location>
        <begin position="135"/>
        <end position="243"/>
    </location>
</feature>
<feature type="transmembrane region" description="Helical" evidence="4">
    <location>
        <begin position="244"/>
        <end position="264"/>
    </location>
</feature>
<feature type="topological domain" description="Extracellular" evidence="3">
    <location>
        <begin position="265"/>
        <end position="303"/>
    </location>
</feature>
<feature type="transmembrane region" description="Helical" evidence="4">
    <location>
        <begin position="304"/>
        <end position="324"/>
    </location>
</feature>
<feature type="topological domain" description="Cytoplasmic" evidence="3">
    <location>
        <begin position="325"/>
        <end position="503"/>
    </location>
</feature>
<feature type="region of interest" description="Disordered" evidence="5">
    <location>
        <begin position="140"/>
        <end position="213"/>
    </location>
</feature>
<feature type="region of interest" description="6 X 2 AA approximate repeats of H-G">
    <location>
        <begin position="145"/>
        <end position="156"/>
    </location>
</feature>
<feature type="compositionally biased region" description="Basic residues" evidence="5">
    <location>
        <begin position="147"/>
        <end position="165"/>
    </location>
</feature>
<feature type="compositionally biased region" description="Polar residues" evidence="5">
    <location>
        <begin position="184"/>
        <end position="196"/>
    </location>
</feature>
<feature type="compositionally biased region" description="Basic and acidic residues" evidence="5">
    <location>
        <begin position="200"/>
        <end position="211"/>
    </location>
</feature>
<feature type="binding site" evidence="2">
    <location>
        <position position="43"/>
    </location>
    <ligand>
        <name>Zn(2+)</name>
        <dbReference type="ChEBI" id="CHEBI:29105"/>
        <note>transported zinc</note>
    </ligand>
</feature>
<feature type="binding site" evidence="1">
    <location>
        <position position="47"/>
    </location>
    <ligand>
        <name>Zn(2+)</name>
        <dbReference type="ChEBI" id="CHEBI:29105"/>
        <note>transported zinc</note>
    </ligand>
</feature>
<feature type="binding site" evidence="1">
    <location>
        <position position="246"/>
    </location>
    <ligand>
        <name>Zn(2+)</name>
        <dbReference type="ChEBI" id="CHEBI:29105"/>
        <note>transported zinc</note>
    </ligand>
</feature>
<feature type="binding site" evidence="2">
    <location>
        <position position="250"/>
    </location>
    <ligand>
        <name>Zn(2+)</name>
        <dbReference type="ChEBI" id="CHEBI:29105"/>
        <note>transported zinc</note>
    </ligand>
</feature>
<feature type="modified residue" description="Phosphoserine" evidence="14">
    <location>
        <position position="502"/>
    </location>
</feature>
<feature type="glycosylation site" description="N-linked (GlcNAc...) asparagine" evidence="4">
    <location>
        <position position="294"/>
    </location>
</feature>
<comment type="function">
    <text evidence="3 6 12">Zinc ion:proton antiporter that could function at the plasma membrane mediating zinc efflux from cells against its electrochemical gradient protecting them from intracellular zinc accumulation and toxicity (Probable). Alternatively, could prevent the transport to the plasma membrane of CACNB2, the L-type calcium channels regulatory subunit, through a yet to be defined mechanism. By modulating the expression of these channels at the plasma membrane, could prevent calcium and zinc influx into cells. By the same mechanism, could also prevent L-type calcium channels-mediated heavy metal influx into cells (PubMed:15451416). In some cells, could also function as a zinc ion:proton antiporter mediating zinc entry into the lumen of cytoplasmic vesicles. In macrophages, can increase zinc ions concentration into the lumen of cytoplasmic vesicles containing engulfed bacteria and could help inactivate them (By similarity). Forms a complex with TMC6/EVER1 and TMC8/EVER2 at the ER membrane of keratynocytes which facilitates zinc uptake into the ER (By similarity). Down-regulates the activity of transcription factors induced by zinc and cytokines (By similarity).</text>
</comment>
<comment type="catalytic activity">
    <reaction evidence="2">
        <text>Zn(2+)(in) + 2 H(+)(out) = Zn(2+)(out) + 2 H(+)(in)</text>
        <dbReference type="Rhea" id="RHEA:72627"/>
        <dbReference type="ChEBI" id="CHEBI:15378"/>
        <dbReference type="ChEBI" id="CHEBI:29105"/>
    </reaction>
</comment>
<comment type="subunit">
    <text evidence="2 3">Homodimer. Interacts with TMEM163 (By similarity). Interacts and forms a complex with TMC6 and TMC8; the interaction regulates zinc transport into the ER (By similarity).</text>
</comment>
<comment type="subcellular location">
    <subcellularLocation>
        <location evidence="2">Cell membrane</location>
        <topology evidence="4">Multi-pass membrane protein</topology>
    </subcellularLocation>
    <subcellularLocation>
        <location evidence="2">Basolateral cell membrane</location>
        <topology evidence="4">Multi-pass membrane protein</topology>
    </subcellularLocation>
    <subcellularLocation>
        <location evidence="3">Cytoplasmic vesicle membrane</location>
        <topology evidence="4">Multi-pass membrane protein</topology>
    </subcellularLocation>
    <subcellularLocation>
        <location evidence="3">Cytoplasm</location>
    </subcellularLocation>
    <subcellularLocation>
        <location evidence="3">Endoplasmic reticulum membrane</location>
        <topology evidence="4">Multi-pass membrane protein</topology>
    </subcellularLocation>
    <subcellularLocation>
        <location evidence="3">Golgi apparatus membrane</location>
        <topology evidence="4">Multi-pass membrane protein</topology>
    </subcellularLocation>
    <subcellularLocation>
        <location evidence="3">Nucleus membrane</location>
        <topology evidence="4">Multi-pass membrane protein</topology>
    </subcellularLocation>
    <text evidence="2 3">Localization to the plasma membrane is regulated by cellular zinc status. Recruitment to the plasma membrane from an internal pool is stimulated by zinc while in absence of zinc the plasma membrane pool is endocytosed and degraded (By similarity). Localizes to the basolateral surface of enterocytes (By similarity). Localizes to zinc-containing intracellular vesicles in macrophages (By similarity). Localizes in the cytoplasm and to the ER, Golgi and nucleus membranes in keratinocytes (By similarity).</text>
</comment>
<comment type="tissue specificity">
    <text>Widely expressed.</text>
</comment>
<comment type="disruption phenotype">
    <text evidence="7">Knockout of Slc30a1 is embryonic lethal.</text>
</comment>
<comment type="similarity">
    <text evidence="10">Belongs to the cation diffusion facilitator (CDF) transporter (TC 2.A.4) family. SLC30A subfamily.</text>
</comment>
<accession>Q60738</accession>
<sequence>MGCWGRNRGRLLCMLLLTFMFMVLEVVVSRVTASLAMLSDSFHMLSDVLALVVALVAERFARRTHATQKNTFGWIRAEVMGALVNAIFLTGLCFAILLEAVERFIEPHEMQQPLVVLSVGVAGLLVNVLGLCLFHHHSGEGQGAGHGHSHGHGHGHLAKGARKAGRAGVEAGAPPGRAPDQEETNTLVANTSNSNGLKADQAEPEKLRSDDPVDVQVNGNLIQESDNLEAEDNRAGQLNMRGVFLHVLGDALGSVIVVVNALVFYFNWKGCTEDDFCTNPCFPDPCKSSVEIINSTQAPMRDAGPCWVLYLDPTLCIIMVCILLYTTYPLLKESALILLQTVPKQIDIKHLVKELRDVDGVEEVHELHVWQLAGSRIIATAHIKCEDPASYMQVAKTIKDVFHNHGIHATTIQPEFASVGSKSSVLPCELACRTQCALKQCCGTRPQVHSGKDAEKAPTVSISCLELSENLEKKARRTKAEGSLPAVVIEIKNVPNKQPESSL</sequence>
<reference key="1">
    <citation type="journal article" date="1995" name="EMBO J.">
        <title>Cloning and functional characterization of a mammalian zinc transporter that confers resistance to zinc.</title>
        <authorList>
            <person name="Palmiter R.D."/>
            <person name="Findley S.D."/>
        </authorList>
    </citation>
    <scope>NUCLEOTIDE SEQUENCE [GENOMIC DNA]</scope>
    <source>
        <tissue>Brain</tissue>
    </source>
</reference>
<reference key="2">
    <citation type="journal article" date="2004" name="Genome Res.">
        <title>The status, quality, and expansion of the NIH full-length cDNA project: the Mammalian Gene Collection (MGC).</title>
        <authorList>
            <consortium name="The MGC Project Team"/>
        </authorList>
    </citation>
    <scope>NUCLEOTIDE SEQUENCE [LARGE SCALE MRNA]</scope>
    <source>
        <tissue>Embryo</tissue>
    </source>
</reference>
<reference key="3">
    <citation type="journal article" date="2004" name="Biochem. Biophys. Res. Commun.">
        <title>A role for ZnT-1 in regulating cellular cation influx.</title>
        <authorList>
            <person name="Segal D."/>
            <person name="Ohana E."/>
            <person name="Besser L."/>
            <person name="Hershfinkel M."/>
            <person name="Moran A."/>
            <person name="Sekler I."/>
        </authorList>
    </citation>
    <scope>FUNCTION</scope>
</reference>
<reference key="4">
    <citation type="journal article" date="2004" name="Genesis">
        <title>Mouse zinc transporter 1 gene provides an essential function during early embryonic development.</title>
        <authorList>
            <person name="Andrews G.K."/>
            <person name="Wang H."/>
            <person name="Dey S.K."/>
            <person name="Palmiter R.D."/>
        </authorList>
    </citation>
    <scope>FUNCTION</scope>
    <scope>DISRUPTION PHENOTYPE</scope>
</reference>
<reference key="5">
    <citation type="journal article" date="2007" name="Proc. Natl. Acad. Sci. U.S.A.">
        <title>Large-scale phosphorylation analysis of mouse liver.</title>
        <authorList>
            <person name="Villen J."/>
            <person name="Beausoleil S.A."/>
            <person name="Gerber S.A."/>
            <person name="Gygi S.P."/>
        </authorList>
    </citation>
    <scope>PHOSPHORYLATION [LARGE SCALE ANALYSIS] AT SER-502</scope>
    <scope>IDENTIFICATION BY MASS SPECTROMETRY [LARGE SCALE ANALYSIS]</scope>
    <source>
        <tissue>Liver</tissue>
    </source>
</reference>
<reference key="6">
    <citation type="journal article" date="2009" name="Immunity">
        <title>The phagosomal proteome in interferon-gamma-activated macrophages.</title>
        <authorList>
            <person name="Trost M."/>
            <person name="English L."/>
            <person name="Lemieux S."/>
            <person name="Courcelles M."/>
            <person name="Desjardins M."/>
            <person name="Thibault P."/>
        </authorList>
    </citation>
    <scope>IDENTIFICATION BY MASS SPECTROMETRY [LARGE SCALE ANALYSIS]</scope>
</reference>
<reference key="7">
    <citation type="journal article" date="2010" name="Cell">
        <title>A tissue-specific atlas of mouse protein phosphorylation and expression.</title>
        <authorList>
            <person name="Huttlin E.L."/>
            <person name="Jedrychowski M.P."/>
            <person name="Elias J.E."/>
            <person name="Goswami T."/>
            <person name="Rad R."/>
            <person name="Beausoleil S.A."/>
            <person name="Villen J."/>
            <person name="Haas W."/>
            <person name="Sowa M.E."/>
            <person name="Gygi S.P."/>
        </authorList>
    </citation>
    <scope>IDENTIFICATION BY MASS SPECTROMETRY [LARGE SCALE ANALYSIS]</scope>
    <source>
        <tissue>Kidney</tissue>
    </source>
</reference>
<keyword id="KW-0050">Antiport</keyword>
<keyword id="KW-1003">Cell membrane</keyword>
<keyword id="KW-0963">Cytoplasm</keyword>
<keyword id="KW-0968">Cytoplasmic vesicle</keyword>
<keyword id="KW-0256">Endoplasmic reticulum</keyword>
<keyword id="KW-0325">Glycoprotein</keyword>
<keyword id="KW-0333">Golgi apparatus</keyword>
<keyword id="KW-0406">Ion transport</keyword>
<keyword id="KW-0472">Membrane</keyword>
<keyword id="KW-0479">Metal-binding</keyword>
<keyword id="KW-0539">Nucleus</keyword>
<keyword id="KW-0597">Phosphoprotein</keyword>
<keyword id="KW-1185">Reference proteome</keyword>
<keyword id="KW-0677">Repeat</keyword>
<keyword id="KW-0812">Transmembrane</keyword>
<keyword id="KW-1133">Transmembrane helix</keyword>
<keyword id="KW-0813">Transport</keyword>
<keyword id="KW-0862">Zinc</keyword>
<keyword id="KW-0864">Zinc transport</keyword>
<proteinExistence type="evidence at protein level"/>
<dbReference type="EMBL" id="U17132">
    <property type="protein sequence ID" value="AAA79233.1"/>
    <property type="molecule type" value="Genomic_DNA"/>
</dbReference>
<dbReference type="EMBL" id="BC052166">
    <property type="protein sequence ID" value="AAH52166.1"/>
    <property type="molecule type" value="mRNA"/>
</dbReference>
<dbReference type="CCDS" id="CCDS15625.1"/>
<dbReference type="PIR" id="S54302">
    <property type="entry name" value="S54302"/>
</dbReference>
<dbReference type="RefSeq" id="NP_033605.1">
    <property type="nucleotide sequence ID" value="NM_009579.3"/>
</dbReference>
<dbReference type="SMR" id="Q60738"/>
<dbReference type="BioGRID" id="204704">
    <property type="interactions" value="5"/>
</dbReference>
<dbReference type="FunCoup" id="Q60738">
    <property type="interactions" value="1773"/>
</dbReference>
<dbReference type="STRING" id="10090.ENSMUSP00000042410"/>
<dbReference type="GlyCosmos" id="Q60738">
    <property type="glycosylation" value="1 site, No reported glycans"/>
</dbReference>
<dbReference type="GlyGen" id="Q60738">
    <property type="glycosylation" value="1 site, 1 N-linked glycan (1 site)"/>
</dbReference>
<dbReference type="iPTMnet" id="Q60738"/>
<dbReference type="PhosphoSitePlus" id="Q60738"/>
<dbReference type="SwissPalm" id="Q60738"/>
<dbReference type="jPOST" id="Q60738"/>
<dbReference type="PaxDb" id="10090-ENSMUSP00000042410"/>
<dbReference type="ProteomicsDB" id="275308"/>
<dbReference type="Pumba" id="Q60738"/>
<dbReference type="Antibodypedia" id="20709">
    <property type="antibodies" value="230 antibodies from 27 providers"/>
</dbReference>
<dbReference type="DNASU" id="22782"/>
<dbReference type="Ensembl" id="ENSMUST00000044954.7">
    <property type="protein sequence ID" value="ENSMUSP00000042410.7"/>
    <property type="gene ID" value="ENSMUSG00000037434.8"/>
</dbReference>
<dbReference type="GeneID" id="22782"/>
<dbReference type="KEGG" id="mmu:22782"/>
<dbReference type="UCSC" id="uc007edc.1">
    <property type="organism name" value="mouse"/>
</dbReference>
<dbReference type="AGR" id="MGI:1345281"/>
<dbReference type="CTD" id="7779"/>
<dbReference type="MGI" id="MGI:1345281">
    <property type="gene designation" value="Slc30a1"/>
</dbReference>
<dbReference type="VEuPathDB" id="HostDB:ENSMUSG00000037434"/>
<dbReference type="eggNOG" id="KOG1483">
    <property type="taxonomic scope" value="Eukaryota"/>
</dbReference>
<dbReference type="GeneTree" id="ENSGT00940000156484"/>
<dbReference type="HOGENOM" id="CLU_013430_4_3_1"/>
<dbReference type="InParanoid" id="Q60738"/>
<dbReference type="OMA" id="CLFHQHG"/>
<dbReference type="OrthoDB" id="29444at2759"/>
<dbReference type="PhylomeDB" id="Q60738"/>
<dbReference type="TreeFam" id="TF313924"/>
<dbReference type="Reactome" id="R-MMU-435368">
    <property type="pathway name" value="Zinc efflux and compartmentalization by the SLC30 family"/>
</dbReference>
<dbReference type="BioGRID-ORCS" id="22782">
    <property type="hits" value="1 hit in 79 CRISPR screens"/>
</dbReference>
<dbReference type="PRO" id="PR:Q60738"/>
<dbReference type="Proteomes" id="UP000000589">
    <property type="component" value="Chromosome 1"/>
</dbReference>
<dbReference type="RNAct" id="Q60738">
    <property type="molecule type" value="protein"/>
</dbReference>
<dbReference type="Bgee" id="ENSMUSG00000037434">
    <property type="expression patterns" value="Expressed in ectoplacental cone and 91 other cell types or tissues"/>
</dbReference>
<dbReference type="ExpressionAtlas" id="Q60738">
    <property type="expression patterns" value="baseline and differential"/>
</dbReference>
<dbReference type="GO" id="GO:0016323">
    <property type="term" value="C:basolateral plasma membrane"/>
    <property type="evidence" value="ECO:0000250"/>
    <property type="project" value="UniProtKB"/>
</dbReference>
<dbReference type="GO" id="GO:0030659">
    <property type="term" value="C:cytoplasmic vesicle membrane"/>
    <property type="evidence" value="ECO:0000250"/>
    <property type="project" value="UniProtKB"/>
</dbReference>
<dbReference type="GO" id="GO:0030425">
    <property type="term" value="C:dendrite"/>
    <property type="evidence" value="ECO:0007669"/>
    <property type="project" value="Ensembl"/>
</dbReference>
<dbReference type="GO" id="GO:0005789">
    <property type="term" value="C:endoplasmic reticulum membrane"/>
    <property type="evidence" value="ECO:0007669"/>
    <property type="project" value="UniProtKB-SubCell"/>
</dbReference>
<dbReference type="GO" id="GO:0099573">
    <property type="term" value="C:glutamatergic postsynaptic density"/>
    <property type="evidence" value="ECO:0007669"/>
    <property type="project" value="Ensembl"/>
</dbReference>
<dbReference type="GO" id="GO:0000139">
    <property type="term" value="C:Golgi membrane"/>
    <property type="evidence" value="ECO:0007669"/>
    <property type="project" value="UniProtKB-SubCell"/>
</dbReference>
<dbReference type="GO" id="GO:0031965">
    <property type="term" value="C:nuclear membrane"/>
    <property type="evidence" value="ECO:0007669"/>
    <property type="project" value="UniProtKB-SubCell"/>
</dbReference>
<dbReference type="GO" id="GO:0005886">
    <property type="term" value="C:plasma membrane"/>
    <property type="evidence" value="ECO:0000250"/>
    <property type="project" value="UniProtKB"/>
</dbReference>
<dbReference type="GO" id="GO:0098839">
    <property type="term" value="C:postsynaptic density membrane"/>
    <property type="evidence" value="ECO:0007669"/>
    <property type="project" value="Ensembl"/>
</dbReference>
<dbReference type="GO" id="GO:0099092">
    <property type="term" value="C:postsynaptic density, intracellular component"/>
    <property type="evidence" value="ECO:0007669"/>
    <property type="project" value="Ensembl"/>
</dbReference>
<dbReference type="GO" id="GO:0098685">
    <property type="term" value="C:Schaffer collateral - CA1 synapse"/>
    <property type="evidence" value="ECO:0007669"/>
    <property type="project" value="Ensembl"/>
</dbReference>
<dbReference type="GO" id="GO:0030315">
    <property type="term" value="C:T-tubule"/>
    <property type="evidence" value="ECO:0007669"/>
    <property type="project" value="Ensembl"/>
</dbReference>
<dbReference type="GO" id="GO:0019855">
    <property type="term" value="F:calcium channel inhibitor activity"/>
    <property type="evidence" value="ECO:0000314"/>
    <property type="project" value="BHF-UCL"/>
</dbReference>
<dbReference type="GO" id="GO:0046872">
    <property type="term" value="F:metal ion binding"/>
    <property type="evidence" value="ECO:0007669"/>
    <property type="project" value="UniProtKB-KW"/>
</dbReference>
<dbReference type="GO" id="GO:0005385">
    <property type="term" value="F:zinc ion transmembrane transporter activity"/>
    <property type="evidence" value="ECO:0000266"/>
    <property type="project" value="MGI"/>
</dbReference>
<dbReference type="GO" id="GO:0140826">
    <property type="term" value="F:zinc:proton antiporter activity"/>
    <property type="evidence" value="ECO:0000250"/>
    <property type="project" value="UniProtKB"/>
</dbReference>
<dbReference type="GO" id="GO:0070574">
    <property type="term" value="P:cadmium ion transmembrane transport"/>
    <property type="evidence" value="ECO:0007669"/>
    <property type="project" value="Ensembl"/>
</dbReference>
<dbReference type="GO" id="GO:0070509">
    <property type="term" value="P:calcium ion import"/>
    <property type="evidence" value="ECO:0007669"/>
    <property type="project" value="Ensembl"/>
</dbReference>
<dbReference type="GO" id="GO:0042742">
    <property type="term" value="P:defense response to bacterium"/>
    <property type="evidence" value="ECO:0000250"/>
    <property type="project" value="UniProtKB"/>
</dbReference>
<dbReference type="GO" id="GO:0071585">
    <property type="term" value="P:detoxification of cadmium ion"/>
    <property type="evidence" value="ECO:0007669"/>
    <property type="project" value="Ensembl"/>
</dbReference>
<dbReference type="GO" id="GO:0001701">
    <property type="term" value="P:in utero embryonic development"/>
    <property type="evidence" value="ECO:0000315"/>
    <property type="project" value="MGI"/>
</dbReference>
<dbReference type="GO" id="GO:0006874">
    <property type="term" value="P:intracellular calcium ion homeostasis"/>
    <property type="evidence" value="ECO:0000314"/>
    <property type="project" value="BHF-UCL"/>
</dbReference>
<dbReference type="GO" id="GO:0006882">
    <property type="term" value="P:intracellular zinc ion homeostasis"/>
    <property type="evidence" value="ECO:0000314"/>
    <property type="project" value="BHF-UCL"/>
</dbReference>
<dbReference type="GO" id="GO:0090281">
    <property type="term" value="P:negative regulation of calcium ion import"/>
    <property type="evidence" value="ECO:0000314"/>
    <property type="project" value="BHF-UCL"/>
</dbReference>
<dbReference type="GO" id="GO:0046929">
    <property type="term" value="P:negative regulation of neurotransmitter secretion"/>
    <property type="evidence" value="ECO:0007669"/>
    <property type="project" value="Ensembl"/>
</dbReference>
<dbReference type="GO" id="GO:0071584">
    <property type="term" value="P:negative regulation of zinc ion transmembrane import"/>
    <property type="evidence" value="ECO:0000314"/>
    <property type="project" value="BHF-UCL"/>
</dbReference>
<dbReference type="GO" id="GO:0061003">
    <property type="term" value="P:positive regulation of dendritic spine morphogenesis"/>
    <property type="evidence" value="ECO:0007669"/>
    <property type="project" value="Ensembl"/>
</dbReference>
<dbReference type="GO" id="GO:1902897">
    <property type="term" value="P:regulation of postsynaptic density protein 95 clustering"/>
    <property type="evidence" value="ECO:0007669"/>
    <property type="project" value="Ensembl"/>
</dbReference>
<dbReference type="GO" id="GO:0140882">
    <property type="term" value="P:zinc export across plasma membrane"/>
    <property type="evidence" value="ECO:0000250"/>
    <property type="project" value="UniProtKB"/>
</dbReference>
<dbReference type="GO" id="GO:0062111">
    <property type="term" value="P:zinc ion import into organelle"/>
    <property type="evidence" value="ECO:0000250"/>
    <property type="project" value="UniProtKB"/>
</dbReference>
<dbReference type="GO" id="GO:0006829">
    <property type="term" value="P:zinc ion transport"/>
    <property type="evidence" value="ECO:0000314"/>
    <property type="project" value="BHF-UCL"/>
</dbReference>
<dbReference type="Gene3D" id="1.20.1510.10">
    <property type="entry name" value="Cation efflux protein transmembrane domain"/>
    <property type="match status" value="1"/>
</dbReference>
<dbReference type="InterPro" id="IPR002524">
    <property type="entry name" value="Cation_efflux"/>
</dbReference>
<dbReference type="InterPro" id="IPR036837">
    <property type="entry name" value="Cation_efflux_CTD_sf"/>
</dbReference>
<dbReference type="InterPro" id="IPR027469">
    <property type="entry name" value="Cation_efflux_TMD_sf"/>
</dbReference>
<dbReference type="NCBIfam" id="TIGR01297">
    <property type="entry name" value="CDF"/>
    <property type="match status" value="1"/>
</dbReference>
<dbReference type="PANTHER" id="PTHR45820">
    <property type="entry name" value="FI23527P1"/>
    <property type="match status" value="1"/>
</dbReference>
<dbReference type="PANTHER" id="PTHR45820:SF1">
    <property type="entry name" value="PROTON-COUPLED ZINC ANTIPORTER SLC30A1"/>
    <property type="match status" value="1"/>
</dbReference>
<dbReference type="Pfam" id="PF01545">
    <property type="entry name" value="Cation_efflux"/>
    <property type="match status" value="1"/>
</dbReference>
<dbReference type="SUPFAM" id="SSF160240">
    <property type="entry name" value="Cation efflux protein cytoplasmic domain-like"/>
    <property type="match status" value="1"/>
</dbReference>
<dbReference type="SUPFAM" id="SSF161111">
    <property type="entry name" value="Cation efflux protein transmembrane domain-like"/>
    <property type="match status" value="1"/>
</dbReference>
<protein>
    <recommendedName>
        <fullName evidence="11">Proton-coupled zinc antiporter SLC30A1</fullName>
    </recommendedName>
    <alternativeName>
        <fullName evidence="13">Solute carrier family 30 member 1</fullName>
    </alternativeName>
    <alternativeName>
        <fullName evidence="9">Zinc transporter 1</fullName>
        <shortName evidence="8">ZnT-1</shortName>
    </alternativeName>
</protein>
<evidence type="ECO:0000250" key="1">
    <source>
        <dbReference type="UniProtKB" id="P69380"/>
    </source>
</evidence>
<evidence type="ECO:0000250" key="2">
    <source>
        <dbReference type="UniProtKB" id="Q62720"/>
    </source>
</evidence>
<evidence type="ECO:0000250" key="3">
    <source>
        <dbReference type="UniProtKB" id="Q9Y6M5"/>
    </source>
</evidence>
<evidence type="ECO:0000255" key="4"/>
<evidence type="ECO:0000256" key="5">
    <source>
        <dbReference type="SAM" id="MobiDB-lite"/>
    </source>
</evidence>
<evidence type="ECO:0000269" key="6">
    <source>
    </source>
</evidence>
<evidence type="ECO:0000269" key="7">
    <source>
    </source>
</evidence>
<evidence type="ECO:0000303" key="8">
    <source>
    </source>
</evidence>
<evidence type="ECO:0000303" key="9">
    <source>
    </source>
</evidence>
<evidence type="ECO:0000305" key="10"/>
<evidence type="ECO:0000305" key="11">
    <source>
    </source>
</evidence>
<evidence type="ECO:0000305" key="12">
    <source>
    </source>
</evidence>
<evidence type="ECO:0000312" key="13">
    <source>
        <dbReference type="MGI" id="MGI:1345281"/>
    </source>
</evidence>
<evidence type="ECO:0007744" key="14">
    <source>
    </source>
</evidence>
<name>ZNT1_MOUSE</name>
<gene>
    <name evidence="13" type="primary">Slc30a1</name>
    <name evidence="9" type="synonym">Znt1</name>
</gene>